<keyword id="KW-0240">DNA-directed RNA polymerase</keyword>
<keyword id="KW-0548">Nucleotidyltransferase</keyword>
<keyword id="KW-0804">Transcription</keyword>
<keyword id="KW-0808">Transferase</keyword>
<name>RPOA_CLOPS</name>
<proteinExistence type="inferred from homology"/>
<reference key="1">
    <citation type="journal article" date="2006" name="Genome Res.">
        <title>Skewed genomic variability in strains of the toxigenic bacterial pathogen, Clostridium perfringens.</title>
        <authorList>
            <person name="Myers G.S.A."/>
            <person name="Rasko D.A."/>
            <person name="Cheung J.K."/>
            <person name="Ravel J."/>
            <person name="Seshadri R."/>
            <person name="DeBoy R.T."/>
            <person name="Ren Q."/>
            <person name="Varga J."/>
            <person name="Awad M.M."/>
            <person name="Brinkac L.M."/>
            <person name="Daugherty S.C."/>
            <person name="Haft D.H."/>
            <person name="Dodson R.J."/>
            <person name="Madupu R."/>
            <person name="Nelson W.C."/>
            <person name="Rosovitz M.J."/>
            <person name="Sullivan S.A."/>
            <person name="Khouri H."/>
            <person name="Dimitrov G.I."/>
            <person name="Watkins K.L."/>
            <person name="Mulligan S."/>
            <person name="Benton J."/>
            <person name="Radune D."/>
            <person name="Fisher D.J."/>
            <person name="Atkins H.S."/>
            <person name="Hiscox T."/>
            <person name="Jost B.H."/>
            <person name="Billington S.J."/>
            <person name="Songer J.G."/>
            <person name="McClane B.A."/>
            <person name="Titball R.W."/>
            <person name="Rood J.I."/>
            <person name="Melville S.B."/>
            <person name="Paulsen I.T."/>
        </authorList>
    </citation>
    <scope>NUCLEOTIDE SEQUENCE [LARGE SCALE GENOMIC DNA]</scope>
    <source>
        <strain>SM101 / Type A</strain>
    </source>
</reference>
<dbReference type="EC" id="2.7.7.6" evidence="1"/>
<dbReference type="EMBL" id="CP000312">
    <property type="protein sequence ID" value="ABG86306.1"/>
    <property type="molecule type" value="Genomic_DNA"/>
</dbReference>
<dbReference type="RefSeq" id="WP_003454404.1">
    <property type="nucleotide sequence ID" value="NZ_CAXVKH010000004.1"/>
</dbReference>
<dbReference type="SMR" id="Q0SQH3"/>
<dbReference type="KEGG" id="cpr:CPR_2370"/>
<dbReference type="Proteomes" id="UP000001824">
    <property type="component" value="Chromosome"/>
</dbReference>
<dbReference type="GO" id="GO:0005737">
    <property type="term" value="C:cytoplasm"/>
    <property type="evidence" value="ECO:0007669"/>
    <property type="project" value="UniProtKB-ARBA"/>
</dbReference>
<dbReference type="GO" id="GO:0000428">
    <property type="term" value="C:DNA-directed RNA polymerase complex"/>
    <property type="evidence" value="ECO:0007669"/>
    <property type="project" value="UniProtKB-KW"/>
</dbReference>
<dbReference type="GO" id="GO:0003677">
    <property type="term" value="F:DNA binding"/>
    <property type="evidence" value="ECO:0007669"/>
    <property type="project" value="UniProtKB-UniRule"/>
</dbReference>
<dbReference type="GO" id="GO:0003899">
    <property type="term" value="F:DNA-directed RNA polymerase activity"/>
    <property type="evidence" value="ECO:0007669"/>
    <property type="project" value="UniProtKB-UniRule"/>
</dbReference>
<dbReference type="GO" id="GO:0046983">
    <property type="term" value="F:protein dimerization activity"/>
    <property type="evidence" value="ECO:0007669"/>
    <property type="project" value="InterPro"/>
</dbReference>
<dbReference type="GO" id="GO:0006351">
    <property type="term" value="P:DNA-templated transcription"/>
    <property type="evidence" value="ECO:0007669"/>
    <property type="project" value="UniProtKB-UniRule"/>
</dbReference>
<dbReference type="CDD" id="cd06928">
    <property type="entry name" value="RNAP_alpha_NTD"/>
    <property type="match status" value="1"/>
</dbReference>
<dbReference type="FunFam" id="2.170.120.12:FF:000001">
    <property type="entry name" value="DNA-directed RNA polymerase subunit alpha"/>
    <property type="match status" value="1"/>
</dbReference>
<dbReference type="Gene3D" id="1.10.150.20">
    <property type="entry name" value="5' to 3' exonuclease, C-terminal subdomain"/>
    <property type="match status" value="1"/>
</dbReference>
<dbReference type="Gene3D" id="2.170.120.12">
    <property type="entry name" value="DNA-directed RNA polymerase, insert domain"/>
    <property type="match status" value="1"/>
</dbReference>
<dbReference type="Gene3D" id="3.30.1360.10">
    <property type="entry name" value="RNA polymerase, RBP11-like subunit"/>
    <property type="match status" value="1"/>
</dbReference>
<dbReference type="HAMAP" id="MF_00059">
    <property type="entry name" value="RNApol_bact_RpoA"/>
    <property type="match status" value="1"/>
</dbReference>
<dbReference type="InterPro" id="IPR011262">
    <property type="entry name" value="DNA-dir_RNA_pol_insert"/>
</dbReference>
<dbReference type="InterPro" id="IPR011263">
    <property type="entry name" value="DNA-dir_RNA_pol_RpoA/D/Rpb3"/>
</dbReference>
<dbReference type="InterPro" id="IPR011773">
    <property type="entry name" value="DNA-dir_RpoA"/>
</dbReference>
<dbReference type="InterPro" id="IPR036603">
    <property type="entry name" value="RBP11-like"/>
</dbReference>
<dbReference type="InterPro" id="IPR011260">
    <property type="entry name" value="RNAP_asu_C"/>
</dbReference>
<dbReference type="InterPro" id="IPR036643">
    <property type="entry name" value="RNApol_insert_sf"/>
</dbReference>
<dbReference type="NCBIfam" id="NF003513">
    <property type="entry name" value="PRK05182.1-2"/>
    <property type="match status" value="1"/>
</dbReference>
<dbReference type="NCBIfam" id="NF003515">
    <property type="entry name" value="PRK05182.2-1"/>
    <property type="match status" value="1"/>
</dbReference>
<dbReference type="NCBIfam" id="NF003519">
    <property type="entry name" value="PRK05182.2-5"/>
    <property type="match status" value="1"/>
</dbReference>
<dbReference type="NCBIfam" id="TIGR02027">
    <property type="entry name" value="rpoA"/>
    <property type="match status" value="1"/>
</dbReference>
<dbReference type="Pfam" id="PF01000">
    <property type="entry name" value="RNA_pol_A_bac"/>
    <property type="match status" value="1"/>
</dbReference>
<dbReference type="Pfam" id="PF03118">
    <property type="entry name" value="RNA_pol_A_CTD"/>
    <property type="match status" value="1"/>
</dbReference>
<dbReference type="Pfam" id="PF01193">
    <property type="entry name" value="RNA_pol_L"/>
    <property type="match status" value="1"/>
</dbReference>
<dbReference type="SMART" id="SM00662">
    <property type="entry name" value="RPOLD"/>
    <property type="match status" value="1"/>
</dbReference>
<dbReference type="SUPFAM" id="SSF47789">
    <property type="entry name" value="C-terminal domain of RNA polymerase alpha subunit"/>
    <property type="match status" value="1"/>
</dbReference>
<dbReference type="SUPFAM" id="SSF56553">
    <property type="entry name" value="Insert subdomain of RNA polymerase alpha subunit"/>
    <property type="match status" value="1"/>
</dbReference>
<dbReference type="SUPFAM" id="SSF55257">
    <property type="entry name" value="RBP11-like subunits of RNA polymerase"/>
    <property type="match status" value="1"/>
</dbReference>
<evidence type="ECO:0000255" key="1">
    <source>
        <dbReference type="HAMAP-Rule" id="MF_00059"/>
    </source>
</evidence>
<protein>
    <recommendedName>
        <fullName evidence="1">DNA-directed RNA polymerase subunit alpha</fullName>
        <shortName evidence="1">RNAP subunit alpha</shortName>
        <ecNumber evidence="1">2.7.7.6</ecNumber>
    </recommendedName>
    <alternativeName>
        <fullName evidence="1">RNA polymerase subunit alpha</fullName>
    </alternativeName>
    <alternativeName>
        <fullName evidence="1">Transcriptase subunit alpha</fullName>
    </alternativeName>
</protein>
<organism>
    <name type="scientific">Clostridium perfringens (strain SM101 / Type A)</name>
    <dbReference type="NCBI Taxonomy" id="289380"/>
    <lineage>
        <taxon>Bacteria</taxon>
        <taxon>Bacillati</taxon>
        <taxon>Bacillota</taxon>
        <taxon>Clostridia</taxon>
        <taxon>Eubacteriales</taxon>
        <taxon>Clostridiaceae</taxon>
        <taxon>Clostridium</taxon>
    </lineage>
</organism>
<feature type="chain" id="PRO_0000264494" description="DNA-directed RNA polymerase subunit alpha">
    <location>
        <begin position="1"/>
        <end position="315"/>
    </location>
</feature>
<feature type="region of interest" description="Alpha N-terminal domain (alpha-NTD)" evidence="1">
    <location>
        <begin position="1"/>
        <end position="228"/>
    </location>
</feature>
<feature type="region of interest" description="Alpha C-terminal domain (alpha-CTD)" evidence="1">
    <location>
        <begin position="245"/>
        <end position="315"/>
    </location>
</feature>
<sequence length="315" mass="35176">MLEIEKPVIQCVESNDNGTYGKFEIEPLERGYGITLGNALRRILLSSLPGVAPTSVKIDSVLHEFSTITGVKEDVTEIILNLKMLALTMEGEGPKTIYIDAQGPGVVTGADIKTDGDVEVVNKDLHIATLDNDGKLYMEIVVNRGRGYVTQNKNKTEDLPLSAIAIDSIYTPVKRVNFSVQNTRVGQITDYDKLTLEIWTNGTIRIEEAISLSAKILIEHFKLFMTLTDNANDVEIMIEKEEDKKEKALEMTIEELDLSVRSYNCLKRAGINTVQELAGKSMDDMMKVRNLGKKSLEEVERKLNELGLNLRLNDE</sequence>
<accession>Q0SQH3</accession>
<comment type="function">
    <text evidence="1">DNA-dependent RNA polymerase catalyzes the transcription of DNA into RNA using the four ribonucleoside triphosphates as substrates.</text>
</comment>
<comment type="catalytic activity">
    <reaction evidence="1">
        <text>RNA(n) + a ribonucleoside 5'-triphosphate = RNA(n+1) + diphosphate</text>
        <dbReference type="Rhea" id="RHEA:21248"/>
        <dbReference type="Rhea" id="RHEA-COMP:14527"/>
        <dbReference type="Rhea" id="RHEA-COMP:17342"/>
        <dbReference type="ChEBI" id="CHEBI:33019"/>
        <dbReference type="ChEBI" id="CHEBI:61557"/>
        <dbReference type="ChEBI" id="CHEBI:140395"/>
        <dbReference type="EC" id="2.7.7.6"/>
    </reaction>
</comment>
<comment type="subunit">
    <text evidence="1">Homodimer. The RNAP catalytic core consists of 2 alpha, 1 beta, 1 beta' and 1 omega subunit. When a sigma factor is associated with the core the holoenzyme is formed, which can initiate transcription.</text>
</comment>
<comment type="domain">
    <text evidence="1">The N-terminal domain is essential for RNAP assembly and basal transcription, whereas the C-terminal domain is involved in interaction with transcriptional regulators and with upstream promoter elements.</text>
</comment>
<comment type="similarity">
    <text evidence="1">Belongs to the RNA polymerase alpha chain family.</text>
</comment>
<gene>
    <name evidence="1" type="primary">rpoA</name>
    <name type="ordered locus">CPR_2370</name>
</gene>